<comment type="function">
    <text evidence="4">Catalyzes DNA unwinding and is involved in telomerase-independent telomere maintenance.</text>
</comment>
<comment type="induction">
    <text evidence="4">Induced in absence of telomerase TLC1.</text>
</comment>
<comment type="miscellaneous">
    <text evidence="4">The protein tested in (PubMed:9837911) started on residue 800; there are 4 identical proteins in yeast.</text>
</comment>
<comment type="similarity">
    <text evidence="5">Belongs to the helicase family. Yeast subtelomeric Y' repeat subfamily.</text>
</comment>
<comment type="sequence caution" evidence="5">
    <conflict type="frameshift">
        <sequence resource="EMBL-CDS" id="AAC48994"/>
    </conflict>
    <text>Produces 2 separate ORFs.</text>
</comment>
<comment type="sequence caution" evidence="5">
    <conflict type="frameshift">
        <sequence resource="EMBL-CDS" id="AAC48995"/>
    </conflict>
    <text>Produces 2 separate ORFs.</text>
</comment>
<keyword id="KW-0067">ATP-binding</keyword>
<keyword id="KW-0347">Helicase</keyword>
<keyword id="KW-0378">Hydrolase</keyword>
<keyword id="KW-0413">Isomerase</keyword>
<keyword id="KW-0547">Nucleotide-binding</keyword>
<keyword id="KW-1185">Reference proteome</keyword>
<keyword id="KW-0677">Repeat</keyword>
<accession>P0CX22</accession>
<accession>D6VTG2</accession>
<accession>O94087</accession>
<accession>P24088</accession>
<accession>P24089</accession>
<accession>Q53WX0</accession>
<accession>Q99313</accession>
<organism>
    <name type="scientific">Saccharomyces cerevisiae (strain ATCC 204508 / S288c)</name>
    <name type="common">Baker's yeast</name>
    <dbReference type="NCBI Taxonomy" id="559292"/>
    <lineage>
        <taxon>Eukaryota</taxon>
        <taxon>Fungi</taxon>
        <taxon>Dikarya</taxon>
        <taxon>Ascomycota</taxon>
        <taxon>Saccharomycotina</taxon>
        <taxon>Saccharomycetes</taxon>
        <taxon>Saccharomycetales</taxon>
        <taxon>Saccharomycetaceae</taxon>
        <taxon>Saccharomyces</taxon>
    </lineage>
</organism>
<sequence length="1796" mass="203781">MKVSDRRKFEKANFDEFESALNNKNDLVHCPSITLFESIPTEVRSFYEDEKSGLIKVVKFRTGAMDRKRSFEKIVISVMVGKNVQKFLTFVEDEPDFQGGPIPSKYLIPKKINLMVYTLFQVHTLKFNRKDYDTLSLFYLNRGYYNELSFRVLERCHEIASARPNDSSTMRTFTDFVSGAPIVRSLQKSTIRKYGYNLAPYMFLLLHVDELSIFSAYQASLPGEKKVDTERLKRDLCPRKPIEIKYFSQICNDMMNKKDRLGDILHIILRACALNFGAGPRGGAGDEEDRSITNEEPIIPSVDEHGLKVCKLRSPNTPRRLRKTLDAVKALLVSSCACTARDLDIFDDTNGVAMWKWIKILYHEVAQETTLKDSYRITLVPSSDGISVCGKLFNREYVRGFYFACKAQFDNLWGELNNCFYMPTVVDIASLILRNREVLFREPKRGIDEYLENDSFLQMIPVKYREIVLPKLRRDTNKMTAALKNKVTVAIDELTVPLMWMVHFAVGYPYRYPELQLLAFAGPQRNVYVDDTTRRIQLYTDYNKNGSSEPRLKTLDGLTSDYVFYFVTVLRQMQICALGNSYDAFNHDPWMDVVGFEDPDQVTNRDISRIVLYSYMFLNTAKGCLVEYATFRQYMRELPKNAPQKLNFREMRQGLIALGRHCVGSRFETDLYESATSELMANHSVQTGRNIYGVDSFSLTSVSGTTATLLQERASERWIQWLGLESDYHCSFSSTRNAEDVVAGEAASSDHDQKISRVTRKRPREPKSTNDILVAGQKLFGSSFEFRDLHQLRLCHEIYMADTPSVAVQAPPGYGKTELFHLPLIALASKGDVKYVSFLFVPYTVLLANCMIRLSRCGCLNVAPVRNFIEEGCDGVTDLYVGIYDDLASTNFTDRIAAWENIVECTFRTNNVKLGYLIVDEFHNFETEVYRQSQFGGITNLDFDAFEKAIFLSGTAPEAVADAALQRIGLTGLAKKSMDINELKRSEDLSRGLSSYPTRMFNLIKEKSEVPLGHVHKIWKKVESQPEEALKLLLALFEIEPESKAIVVASTTNEVEELACSWRKYFRVVWIHGKLGAAEKVSRTKEFVTDGSMRVLIGTKLVTEGIDIKQLMMVIMLDNRLNIIELIQGVGRLRDGGLCYLLSRKNSWAARNRKGELPPIKEGCITEQVREFYGLESKKGKKGQHVGCCGSRTDLSADTVELIERMDRLAEKQATASMSIIALPSSFQESNSSDRCRKYCSSDEDSDTCIHGSANASTNATTNSSTNATTTASTNVRTSATTTASINVRTSAITTESTNSSTNATTTASTNVRTSATTTASINVRTSATTTESTNSNTSATTTESTDSNTSATTTESTDSNTSATTTASTNSSTNATTTASTNSSTNATTTESTNASAKEDANKDGNAEDNRFHPVTDINKESYKRKGSQMVLLERKKLKAQFPNTSENMNVLQFLGFRSDEIKHLFLYGIDVYFCPEGVFTQYGLCKGCQKMFELCVCWAGQKVSYRRMAWEALAVERMLRNDEEYKEYLEDIEPYHGDPVGYLKYFSVKRGEIYSQIQRNYAWYLAITRRRETISVLDSTRGKQGSQVFRMSGRQIKELYYKVWSNLRESKTEVLQYFLNWDEKKCREEWEAKDDTVFVEALEKVGVFQRLRSMTSAGLQGPQYVKLQFSRHHRQLRSRYELSLGMHLRDQLALGVTPSKVPHWTAFLSMLIGLFYNKTFRQKLEYLLEQISEVWLLPHWLDLANVEVLAADNTRVPLYMLMVAVHKELDSDDVPDGRFDIILLCRDSSREVGE</sequence>
<gene>
    <name type="primary">YRF1-8</name>
    <name type="ordered locus">YOR396W</name>
    <name type="ORF">O7535</name>
</gene>
<protein>
    <recommendedName>
        <fullName>Y' element ATP-dependent helicase protein 1 copy 8</fullName>
        <ecNumber evidence="4">5.6.2.-</ecNumber>
    </recommendedName>
</protein>
<proteinExistence type="evidence at protein level"/>
<dbReference type="EC" id="5.6.2.-" evidence="4"/>
<dbReference type="EMBL" id="U23472">
    <property type="protein sequence ID" value="AAC48994.1"/>
    <property type="status" value="ALT_FRAME"/>
    <property type="molecule type" value="Genomic_DNA"/>
</dbReference>
<dbReference type="EMBL" id="U23472">
    <property type="protein sequence ID" value="AAC48995.1"/>
    <property type="status" value="ALT_FRAME"/>
    <property type="molecule type" value="Genomic_DNA"/>
</dbReference>
<dbReference type="EMBL" id="Z75302">
    <property type="protein sequence ID" value="CAA99727.1"/>
    <property type="molecule type" value="Genomic_DNA"/>
</dbReference>
<dbReference type="EMBL" id="BK006948">
    <property type="protein sequence ID" value="DAA11154.1"/>
    <property type="molecule type" value="Genomic_DNA"/>
</dbReference>
<dbReference type="PIR" id="S65004">
    <property type="entry name" value="S65004"/>
</dbReference>
<dbReference type="RefSeq" id="NP_061495.4">
    <property type="nucleotide sequence ID" value="NM_001184447.3"/>
</dbReference>
<dbReference type="BioGRID" id="31723">
    <property type="interactions" value="19"/>
</dbReference>
<dbReference type="BioGRID" id="32590">
    <property type="interactions" value="32"/>
</dbReference>
<dbReference type="BioGRID" id="34775">
    <property type="interactions" value="4"/>
</dbReference>
<dbReference type="FunCoup" id="P0CX22">
    <property type="interactions" value="18"/>
</dbReference>
<dbReference type="iPTMnet" id="P0CX22"/>
<dbReference type="EnsemblFungi" id="YDR545W_mRNA">
    <property type="protein sequence ID" value="YDR545W"/>
    <property type="gene ID" value="YDR545W"/>
</dbReference>
<dbReference type="EnsemblFungi" id="YLR467W_mRNA">
    <property type="protein sequence ID" value="YLR467W"/>
    <property type="gene ID" value="YLR467W"/>
</dbReference>
<dbReference type="EnsemblFungi" id="YOR396W_mRNA">
    <property type="protein sequence ID" value="YOR396W"/>
    <property type="gene ID" value="YOR396W"/>
</dbReference>
<dbReference type="GeneID" id="854577"/>
<dbReference type="KEGG" id="sce:YDR545W"/>
<dbReference type="KEGG" id="sce:YLR467W"/>
<dbReference type="KEGG" id="sce:YOR396W"/>
<dbReference type="AGR" id="SGD:S000007526"/>
<dbReference type="SGD" id="S000007526">
    <property type="gene designation" value="YRF1-8"/>
</dbReference>
<dbReference type="VEuPathDB" id="FungiDB:YDR545W"/>
<dbReference type="VEuPathDB" id="FungiDB:YLR467W"/>
<dbReference type="VEuPathDB" id="FungiDB:YOR396W"/>
<dbReference type="GeneTree" id="ENSGT00940000153173"/>
<dbReference type="HOGENOM" id="CLU_003044_2_0_1"/>
<dbReference type="InParanoid" id="P0CX22"/>
<dbReference type="OrthoDB" id="4070089at2759"/>
<dbReference type="BioCyc" id="YEAST:G3O-33895-MONOMER"/>
<dbReference type="Reactome" id="R-SCE-5689880">
    <property type="pathway name" value="Ub-specific processing proteases"/>
</dbReference>
<dbReference type="PRO" id="PR:P0CX22"/>
<dbReference type="Proteomes" id="UP000002311">
    <property type="component" value="Chromosome XV"/>
</dbReference>
<dbReference type="RNAct" id="P0CX22">
    <property type="molecule type" value="protein"/>
</dbReference>
<dbReference type="ExpressionAtlas" id="P0CX22">
    <property type="expression patterns" value="baseline and differential"/>
</dbReference>
<dbReference type="GO" id="GO:0005737">
    <property type="term" value="C:cytoplasm"/>
    <property type="evidence" value="ECO:0000318"/>
    <property type="project" value="GO_Central"/>
</dbReference>
<dbReference type="GO" id="GO:0005524">
    <property type="term" value="F:ATP binding"/>
    <property type="evidence" value="ECO:0007669"/>
    <property type="project" value="UniProtKB-KW"/>
</dbReference>
<dbReference type="GO" id="GO:0016887">
    <property type="term" value="F:ATP hydrolysis activity"/>
    <property type="evidence" value="ECO:0007669"/>
    <property type="project" value="RHEA"/>
</dbReference>
<dbReference type="GO" id="GO:0004386">
    <property type="term" value="F:helicase activity"/>
    <property type="evidence" value="ECO:0000250"/>
    <property type="project" value="SGD"/>
</dbReference>
<dbReference type="GO" id="GO:0003676">
    <property type="term" value="F:nucleic acid binding"/>
    <property type="evidence" value="ECO:0007669"/>
    <property type="project" value="InterPro"/>
</dbReference>
<dbReference type="GO" id="GO:0000722">
    <property type="term" value="P:telomere maintenance via recombination"/>
    <property type="evidence" value="ECO:0007669"/>
    <property type="project" value="UniProtKB-ARBA"/>
</dbReference>
<dbReference type="FunFam" id="3.40.50.300:FF:001914">
    <property type="entry name" value="YML133C-like protein"/>
    <property type="match status" value="1"/>
</dbReference>
<dbReference type="FunFam" id="3.40.50.300:FF:002410">
    <property type="entry name" value="YML133C-like protein"/>
    <property type="match status" value="1"/>
</dbReference>
<dbReference type="Gene3D" id="3.40.50.300">
    <property type="entry name" value="P-loop containing nucleotide triphosphate hydrolases"/>
    <property type="match status" value="1"/>
</dbReference>
<dbReference type="InterPro" id="IPR011545">
    <property type="entry name" value="DEAD/DEAH_box_helicase_dom"/>
</dbReference>
<dbReference type="InterPro" id="IPR014001">
    <property type="entry name" value="Helicase_ATP-bd"/>
</dbReference>
<dbReference type="InterPro" id="IPR001650">
    <property type="entry name" value="Helicase_C-like"/>
</dbReference>
<dbReference type="InterPro" id="IPR027417">
    <property type="entry name" value="P-loop_NTPase"/>
</dbReference>
<dbReference type="InterPro" id="IPR021646">
    <property type="entry name" value="Sir1_ORC-binding"/>
</dbReference>
<dbReference type="InterPro" id="IPR050978">
    <property type="entry name" value="Y'_ATP-dependent_helicase"/>
</dbReference>
<dbReference type="PANTHER" id="PTHR31583">
    <property type="match status" value="1"/>
</dbReference>
<dbReference type="PANTHER" id="PTHR31583:SF2">
    <property type="match status" value="1"/>
</dbReference>
<dbReference type="Pfam" id="PF00270">
    <property type="entry name" value="DEAD"/>
    <property type="match status" value="1"/>
</dbReference>
<dbReference type="Pfam" id="PF00271">
    <property type="entry name" value="Helicase_C"/>
    <property type="match status" value="1"/>
</dbReference>
<dbReference type="Pfam" id="PF11603">
    <property type="entry name" value="Sir1"/>
    <property type="match status" value="1"/>
</dbReference>
<dbReference type="SMART" id="SM00487">
    <property type="entry name" value="DEXDc"/>
    <property type="match status" value="1"/>
</dbReference>
<dbReference type="SMART" id="SM00490">
    <property type="entry name" value="HELICc"/>
    <property type="match status" value="1"/>
</dbReference>
<dbReference type="SUPFAM" id="SSF52540">
    <property type="entry name" value="P-loop containing nucleoside triphosphate hydrolases"/>
    <property type="match status" value="1"/>
</dbReference>
<dbReference type="PROSITE" id="PS51192">
    <property type="entry name" value="HELICASE_ATP_BIND_1"/>
    <property type="match status" value="1"/>
</dbReference>
<dbReference type="PROSITE" id="PS51194">
    <property type="entry name" value="HELICASE_CTER"/>
    <property type="match status" value="1"/>
</dbReference>
<feature type="chain" id="PRO_0000409757" description="Y' element ATP-dependent helicase protein 1 copy 8">
    <location>
        <begin position="1"/>
        <end position="1796"/>
    </location>
</feature>
<feature type="domain" description="Helicase ATP-binding" evidence="1">
    <location>
        <begin position="797"/>
        <end position="974"/>
    </location>
</feature>
<feature type="domain" description="Helicase C-terminal" evidence="2">
    <location>
        <begin position="1031"/>
        <end position="1180"/>
    </location>
</feature>
<feature type="region of interest" description="Disordered" evidence="3">
    <location>
        <begin position="743"/>
        <end position="767"/>
    </location>
</feature>
<feature type="region of interest" description="Disordered" evidence="3">
    <location>
        <begin position="1254"/>
        <end position="1278"/>
    </location>
</feature>
<feature type="region of interest" description="Disordered" evidence="3">
    <location>
        <begin position="1294"/>
        <end position="1421"/>
    </location>
</feature>
<feature type="compositionally biased region" description="Low complexity" evidence="3">
    <location>
        <begin position="1294"/>
        <end position="1397"/>
    </location>
</feature>
<feature type="compositionally biased region" description="Basic and acidic residues" evidence="3">
    <location>
        <begin position="1398"/>
        <end position="1421"/>
    </location>
</feature>
<feature type="binding site" evidence="1">
    <location>
        <begin position="810"/>
        <end position="817"/>
    </location>
    <ligand>
        <name>ATP</name>
        <dbReference type="ChEBI" id="CHEBI:30616"/>
    </ligand>
</feature>
<feature type="sequence conflict" description="In Ref. 1; AAC48995." evidence="5" ref="1">
    <original>I</original>
    <variation>T</variation>
    <location>
        <position position="1293"/>
    </location>
</feature>
<reference key="1">
    <citation type="journal article" date="1992" name="Genetics">
        <title>The structure and evolution of subtelomeric Y' repeats in Saccharomyces cerevisiae.</title>
        <authorList>
            <person name="Louis E.J."/>
            <person name="Haber J.E."/>
        </authorList>
    </citation>
    <scope>NUCLEOTIDE SEQUENCE [GENOMIC DNA]</scope>
    <source>
        <strain>ATCC 90839 / S288c / YP1</strain>
    </source>
</reference>
<reference key="2">
    <citation type="journal article" date="1995" name="Yeast">
        <title>Sequence analysis of the right end of chromosome XV in Saccharomyces cerevisiae: an insight into the structural and functional significance of sub-telomeric repeat sequences.</title>
        <authorList>
            <person name="Pryde F.E."/>
            <person name="Huckle T.C."/>
            <person name="Louis E.J."/>
        </authorList>
    </citation>
    <scope>NUCLEOTIDE SEQUENCE [GENOMIC DNA]</scope>
    <source>
        <strain>ATCC 90839 / S288c / YP1</strain>
    </source>
</reference>
<reference key="3">
    <citation type="journal article" date="1997" name="Nature">
        <title>The nucleotide sequence of Saccharomyces cerevisiae chromosome XV.</title>
        <authorList>
            <person name="Dujon B."/>
            <person name="Albermann K."/>
            <person name="Aldea M."/>
            <person name="Alexandraki D."/>
            <person name="Ansorge W."/>
            <person name="Arino J."/>
            <person name="Benes V."/>
            <person name="Bohn C."/>
            <person name="Bolotin-Fukuhara M."/>
            <person name="Bordonne R."/>
            <person name="Boyer J."/>
            <person name="Camasses A."/>
            <person name="Casamayor A."/>
            <person name="Casas C."/>
            <person name="Cheret G."/>
            <person name="Cziepluch C."/>
            <person name="Daignan-Fornier B."/>
            <person name="Dang V.-D."/>
            <person name="de Haan M."/>
            <person name="Delius H."/>
            <person name="Durand P."/>
            <person name="Fairhead C."/>
            <person name="Feldmann H."/>
            <person name="Gaillon L."/>
            <person name="Galisson F."/>
            <person name="Gamo F.-J."/>
            <person name="Gancedo C."/>
            <person name="Goffeau A."/>
            <person name="Goulding S.E."/>
            <person name="Grivell L.A."/>
            <person name="Habbig B."/>
            <person name="Hand N.J."/>
            <person name="Hani J."/>
            <person name="Hattenhorst U."/>
            <person name="Hebling U."/>
            <person name="Hernando Y."/>
            <person name="Herrero E."/>
            <person name="Heumann K."/>
            <person name="Hiesel R."/>
            <person name="Hilger F."/>
            <person name="Hofmann B."/>
            <person name="Hollenberg C.P."/>
            <person name="Hughes B."/>
            <person name="Jauniaux J.-C."/>
            <person name="Kalogeropoulos A."/>
            <person name="Katsoulou C."/>
            <person name="Kordes E."/>
            <person name="Lafuente M.J."/>
            <person name="Landt O."/>
            <person name="Louis E.J."/>
            <person name="Maarse A.C."/>
            <person name="Madania A."/>
            <person name="Mannhaupt G."/>
            <person name="Marck C."/>
            <person name="Martin R.P."/>
            <person name="Mewes H.-W."/>
            <person name="Michaux G."/>
            <person name="Paces V."/>
            <person name="Parle-McDermott A.G."/>
            <person name="Pearson B.M."/>
            <person name="Perrin A."/>
            <person name="Pettersson B."/>
            <person name="Poch O."/>
            <person name="Pohl T.M."/>
            <person name="Poirey R."/>
            <person name="Portetelle D."/>
            <person name="Pujol A."/>
            <person name="Purnelle B."/>
            <person name="Ramezani Rad M."/>
            <person name="Rechmann S."/>
            <person name="Schwager C."/>
            <person name="Schweizer M."/>
            <person name="Sor F."/>
            <person name="Sterky F."/>
            <person name="Tarassov I.A."/>
            <person name="Teodoru C."/>
            <person name="Tettelin H."/>
            <person name="Thierry A."/>
            <person name="Tobiasch E."/>
            <person name="Tzermia M."/>
            <person name="Uhlen M."/>
            <person name="Unseld M."/>
            <person name="Valens M."/>
            <person name="Vandenbol M."/>
            <person name="Vetter I."/>
            <person name="Vlcek C."/>
            <person name="Voet M."/>
            <person name="Volckaert G."/>
            <person name="Voss H."/>
            <person name="Wambutt R."/>
            <person name="Wedler H."/>
            <person name="Wiemann S."/>
            <person name="Winsor B."/>
            <person name="Wolfe K.H."/>
            <person name="Zollner A."/>
            <person name="Zumstein E."/>
            <person name="Kleine K."/>
        </authorList>
    </citation>
    <scope>NUCLEOTIDE SEQUENCE [LARGE SCALE GENOMIC DNA]</scope>
    <source>
        <strain>ATCC 204508 / S288c</strain>
    </source>
</reference>
<reference key="4">
    <citation type="journal article" date="2014" name="G3 (Bethesda)">
        <title>The reference genome sequence of Saccharomyces cerevisiae: Then and now.</title>
        <authorList>
            <person name="Engel S.R."/>
            <person name="Dietrich F.S."/>
            <person name="Fisk D.G."/>
            <person name="Binkley G."/>
            <person name="Balakrishnan R."/>
            <person name="Costanzo M.C."/>
            <person name="Dwight S.S."/>
            <person name="Hitz B.C."/>
            <person name="Karra K."/>
            <person name="Nash R.S."/>
            <person name="Weng S."/>
            <person name="Wong E.D."/>
            <person name="Lloyd P."/>
            <person name="Skrzypek M.S."/>
            <person name="Miyasato S.R."/>
            <person name="Simison M."/>
            <person name="Cherry J.M."/>
        </authorList>
    </citation>
    <scope>GENOME REANNOTATION</scope>
    <source>
        <strain>ATCC 204508 / S288c</strain>
    </source>
</reference>
<reference key="5">
    <citation type="journal article" date="1998" name="J. Biol. Chem.">
        <title>Y'-Help1, a DNA helicase encoded by the yeast subtelomeric Y' element, is induced in survivors defective for telomerase.</title>
        <authorList>
            <person name="Yamada M."/>
            <person name="Hayatsu N."/>
            <person name="Matsuura A."/>
            <person name="Ishikawa F."/>
        </authorList>
    </citation>
    <scope>FUNCTION AS A HELICASE</scope>
    <scope>INDUCTION</scope>
</reference>
<evidence type="ECO:0000255" key="1">
    <source>
        <dbReference type="PROSITE-ProRule" id="PRU00541"/>
    </source>
</evidence>
<evidence type="ECO:0000255" key="2">
    <source>
        <dbReference type="PROSITE-ProRule" id="PRU00542"/>
    </source>
</evidence>
<evidence type="ECO:0000256" key="3">
    <source>
        <dbReference type="SAM" id="MobiDB-lite"/>
    </source>
</evidence>
<evidence type="ECO:0000269" key="4">
    <source>
    </source>
</evidence>
<evidence type="ECO:0000305" key="5"/>
<name>YRF18_YEAST</name>